<name>RR15_CHAGL</name>
<accession>Q8M9T4</accession>
<proteinExistence type="inferred from homology"/>
<dbReference type="EMBL" id="AF494278">
    <property type="protein sequence ID" value="AAM96571.1"/>
    <property type="molecule type" value="Genomic_DNA"/>
</dbReference>
<dbReference type="RefSeq" id="NP_683859.1">
    <property type="nucleotide sequence ID" value="NC_004115.1"/>
</dbReference>
<dbReference type="SMR" id="Q8M9T4"/>
<dbReference type="GeneID" id="860727"/>
<dbReference type="GO" id="GO:0009507">
    <property type="term" value="C:chloroplast"/>
    <property type="evidence" value="ECO:0007669"/>
    <property type="project" value="UniProtKB-SubCell"/>
</dbReference>
<dbReference type="GO" id="GO:1990904">
    <property type="term" value="C:ribonucleoprotein complex"/>
    <property type="evidence" value="ECO:0007669"/>
    <property type="project" value="UniProtKB-KW"/>
</dbReference>
<dbReference type="GO" id="GO:0005840">
    <property type="term" value="C:ribosome"/>
    <property type="evidence" value="ECO:0007669"/>
    <property type="project" value="UniProtKB-KW"/>
</dbReference>
<dbReference type="GO" id="GO:0003735">
    <property type="term" value="F:structural constituent of ribosome"/>
    <property type="evidence" value="ECO:0007669"/>
    <property type="project" value="InterPro"/>
</dbReference>
<dbReference type="GO" id="GO:0006412">
    <property type="term" value="P:translation"/>
    <property type="evidence" value="ECO:0007669"/>
    <property type="project" value="UniProtKB-UniRule"/>
</dbReference>
<dbReference type="CDD" id="cd00353">
    <property type="entry name" value="Ribosomal_S15p_S13e"/>
    <property type="match status" value="1"/>
</dbReference>
<dbReference type="Gene3D" id="1.10.287.10">
    <property type="entry name" value="S15/NS1, RNA-binding"/>
    <property type="match status" value="1"/>
</dbReference>
<dbReference type="HAMAP" id="MF_01343_B">
    <property type="entry name" value="Ribosomal_uS15_B"/>
    <property type="match status" value="1"/>
</dbReference>
<dbReference type="InterPro" id="IPR000589">
    <property type="entry name" value="Ribosomal_uS15"/>
</dbReference>
<dbReference type="InterPro" id="IPR005290">
    <property type="entry name" value="Ribosomal_uS15_bac-type"/>
</dbReference>
<dbReference type="InterPro" id="IPR009068">
    <property type="entry name" value="uS15_NS1_RNA-bd_sf"/>
</dbReference>
<dbReference type="NCBIfam" id="TIGR00952">
    <property type="entry name" value="S15_bact"/>
    <property type="match status" value="1"/>
</dbReference>
<dbReference type="PANTHER" id="PTHR23321">
    <property type="entry name" value="RIBOSOMAL PROTEIN S15, BACTERIAL AND ORGANELLAR"/>
    <property type="match status" value="1"/>
</dbReference>
<dbReference type="PANTHER" id="PTHR23321:SF26">
    <property type="entry name" value="SMALL RIBOSOMAL SUBUNIT PROTEIN US15M"/>
    <property type="match status" value="1"/>
</dbReference>
<dbReference type="Pfam" id="PF00312">
    <property type="entry name" value="Ribosomal_S15"/>
    <property type="match status" value="1"/>
</dbReference>
<dbReference type="SMART" id="SM01387">
    <property type="entry name" value="Ribosomal_S15"/>
    <property type="match status" value="1"/>
</dbReference>
<dbReference type="SUPFAM" id="SSF47060">
    <property type="entry name" value="S15/NS1 RNA-binding domain"/>
    <property type="match status" value="1"/>
</dbReference>
<dbReference type="PROSITE" id="PS00362">
    <property type="entry name" value="RIBOSOMAL_S15"/>
    <property type="match status" value="1"/>
</dbReference>
<organism>
    <name type="scientific">Chaetosphaeridium globosum</name>
    <name type="common">Charophycean green alga</name>
    <name type="synonym">Herposteiron globosum</name>
    <dbReference type="NCBI Taxonomy" id="96477"/>
    <lineage>
        <taxon>Eukaryota</taxon>
        <taxon>Viridiplantae</taxon>
        <taxon>Streptophyta</taxon>
        <taxon>Coleochaetophyceae</taxon>
        <taxon>Coleochaetales</taxon>
        <taxon>Chaetosphaeridiaceae</taxon>
        <taxon>Chaetosphaeridium</taxon>
    </lineage>
</organism>
<feature type="chain" id="PRO_0000354244" description="Small ribosomal subunit protein uS15c">
    <location>
        <begin position="1"/>
        <end position="85"/>
    </location>
</feature>
<evidence type="ECO:0000250" key="1"/>
<evidence type="ECO:0000305" key="2"/>
<reference key="1">
    <citation type="journal article" date="2002" name="Proc. Natl. Acad. Sci. U.S.A.">
        <title>The chloroplast and mitochondrial genome sequences of the charophyte Chaetosphaeridium globosum: insights into the timing of the events that restructured organelle DNAs within the green algal lineage that led to land plants.</title>
        <authorList>
            <person name="Turmel M."/>
            <person name="Otis C."/>
            <person name="Lemieux C."/>
        </authorList>
    </citation>
    <scope>NUCLEOTIDE SEQUENCE [LARGE SCALE GENOMIC DNA]</scope>
    <source>
        <strain>M1311</strain>
    </source>
</reference>
<keyword id="KW-0150">Chloroplast</keyword>
<keyword id="KW-0934">Plastid</keyword>
<keyword id="KW-0687">Ribonucleoprotein</keyword>
<keyword id="KW-0689">Ribosomal protein</keyword>
<geneLocation type="chloroplast"/>
<comment type="subunit">
    <text evidence="1">Part of the 30S ribosomal subunit.</text>
</comment>
<comment type="subcellular location">
    <subcellularLocation>
        <location>Plastid</location>
        <location>Chloroplast</location>
    </subcellularLocation>
</comment>
<comment type="similarity">
    <text evidence="2">Belongs to the universal ribosomal protein uS15 family.</text>
</comment>
<gene>
    <name type="primary">rps15</name>
</gene>
<protein>
    <recommendedName>
        <fullName evidence="2">Small ribosomal subunit protein uS15c</fullName>
    </recommendedName>
    <alternativeName>
        <fullName>30S ribosomal protein S15, chloroplastic</fullName>
    </alternativeName>
</protein>
<sequence length="85" mass="10030">MLTNQLNSESKNINKIGSIEEQVVSLTQRVKFISNHLKINKKDYSSQRGLRKILGKRKRLLTYLYKKDFLKYKFVIQSLGIRSLK</sequence>